<gene>
    <name evidence="1" type="primary">trmFO</name>
    <name type="synonym">gid</name>
    <name type="ordered locus">llmg_1271</name>
</gene>
<comment type="function">
    <text evidence="1">Catalyzes the folate-dependent formation of 5-methyl-uridine at position 54 (M-5-U54) in all tRNAs.</text>
</comment>
<comment type="catalytic activity">
    <reaction evidence="1">
        <text>uridine(54) in tRNA + (6R)-5,10-methylene-5,6,7,8-tetrahydrofolate + NADH + H(+) = 5-methyluridine(54) in tRNA + (6S)-5,6,7,8-tetrahydrofolate + NAD(+)</text>
        <dbReference type="Rhea" id="RHEA:16873"/>
        <dbReference type="Rhea" id="RHEA-COMP:10167"/>
        <dbReference type="Rhea" id="RHEA-COMP:10193"/>
        <dbReference type="ChEBI" id="CHEBI:15378"/>
        <dbReference type="ChEBI" id="CHEBI:15636"/>
        <dbReference type="ChEBI" id="CHEBI:57453"/>
        <dbReference type="ChEBI" id="CHEBI:57540"/>
        <dbReference type="ChEBI" id="CHEBI:57945"/>
        <dbReference type="ChEBI" id="CHEBI:65315"/>
        <dbReference type="ChEBI" id="CHEBI:74447"/>
        <dbReference type="EC" id="2.1.1.74"/>
    </reaction>
</comment>
<comment type="catalytic activity">
    <reaction evidence="1">
        <text>uridine(54) in tRNA + (6R)-5,10-methylene-5,6,7,8-tetrahydrofolate + NADPH + H(+) = 5-methyluridine(54) in tRNA + (6S)-5,6,7,8-tetrahydrofolate + NADP(+)</text>
        <dbReference type="Rhea" id="RHEA:62372"/>
        <dbReference type="Rhea" id="RHEA-COMP:10167"/>
        <dbReference type="Rhea" id="RHEA-COMP:10193"/>
        <dbReference type="ChEBI" id="CHEBI:15378"/>
        <dbReference type="ChEBI" id="CHEBI:15636"/>
        <dbReference type="ChEBI" id="CHEBI:57453"/>
        <dbReference type="ChEBI" id="CHEBI:57783"/>
        <dbReference type="ChEBI" id="CHEBI:58349"/>
        <dbReference type="ChEBI" id="CHEBI:65315"/>
        <dbReference type="ChEBI" id="CHEBI:74447"/>
        <dbReference type="EC" id="2.1.1.74"/>
    </reaction>
</comment>
<comment type="cofactor">
    <cofactor evidence="1">
        <name>FAD</name>
        <dbReference type="ChEBI" id="CHEBI:57692"/>
    </cofactor>
</comment>
<comment type="subcellular location">
    <subcellularLocation>
        <location evidence="1">Cytoplasm</location>
    </subcellularLocation>
</comment>
<comment type="similarity">
    <text evidence="1">Belongs to the MnmG family. TrmFO subfamily.</text>
</comment>
<dbReference type="EC" id="2.1.1.74" evidence="1"/>
<dbReference type="EMBL" id="AM406671">
    <property type="protein sequence ID" value="CAL97864.1"/>
    <property type="molecule type" value="Genomic_DNA"/>
</dbReference>
<dbReference type="RefSeq" id="WP_011835150.1">
    <property type="nucleotide sequence ID" value="NC_009004.1"/>
</dbReference>
<dbReference type="SMR" id="A2RKQ0"/>
<dbReference type="STRING" id="416870.llmg_1271"/>
<dbReference type="KEGG" id="llm:llmg_1271"/>
<dbReference type="eggNOG" id="COG1206">
    <property type="taxonomic scope" value="Bacteria"/>
</dbReference>
<dbReference type="HOGENOM" id="CLU_033057_1_0_9"/>
<dbReference type="OrthoDB" id="9803114at2"/>
<dbReference type="PhylomeDB" id="A2RKQ0"/>
<dbReference type="Proteomes" id="UP000000364">
    <property type="component" value="Chromosome"/>
</dbReference>
<dbReference type="GO" id="GO:0005829">
    <property type="term" value="C:cytosol"/>
    <property type="evidence" value="ECO:0007669"/>
    <property type="project" value="TreeGrafter"/>
</dbReference>
<dbReference type="GO" id="GO:0050660">
    <property type="term" value="F:flavin adenine dinucleotide binding"/>
    <property type="evidence" value="ECO:0007669"/>
    <property type="project" value="UniProtKB-UniRule"/>
</dbReference>
<dbReference type="GO" id="GO:0047151">
    <property type="term" value="F:tRNA (uracil(54)-C5)-methyltransferase activity, 5,10-methylenetetrahydrofolate-dependent"/>
    <property type="evidence" value="ECO:0007669"/>
    <property type="project" value="UniProtKB-UniRule"/>
</dbReference>
<dbReference type="GO" id="GO:0030488">
    <property type="term" value="P:tRNA methylation"/>
    <property type="evidence" value="ECO:0007669"/>
    <property type="project" value="TreeGrafter"/>
</dbReference>
<dbReference type="GO" id="GO:0002098">
    <property type="term" value="P:tRNA wobble uridine modification"/>
    <property type="evidence" value="ECO:0007669"/>
    <property type="project" value="TreeGrafter"/>
</dbReference>
<dbReference type="FunFam" id="3.50.50.60:FF:000035">
    <property type="entry name" value="Methylenetetrahydrofolate--tRNA-(uracil-5-)-methyltransferase TrmFO"/>
    <property type="match status" value="1"/>
</dbReference>
<dbReference type="FunFam" id="3.50.50.60:FF:000040">
    <property type="entry name" value="Methylenetetrahydrofolate--tRNA-(uracil-5-)-methyltransferase TrmFO"/>
    <property type="match status" value="1"/>
</dbReference>
<dbReference type="Gene3D" id="3.50.50.60">
    <property type="entry name" value="FAD/NAD(P)-binding domain"/>
    <property type="match status" value="2"/>
</dbReference>
<dbReference type="HAMAP" id="MF_01037">
    <property type="entry name" value="TrmFO"/>
    <property type="match status" value="1"/>
</dbReference>
<dbReference type="InterPro" id="IPR036188">
    <property type="entry name" value="FAD/NAD-bd_sf"/>
</dbReference>
<dbReference type="InterPro" id="IPR002218">
    <property type="entry name" value="MnmG-rel"/>
</dbReference>
<dbReference type="InterPro" id="IPR020595">
    <property type="entry name" value="MnmG-rel_CS"/>
</dbReference>
<dbReference type="InterPro" id="IPR040131">
    <property type="entry name" value="MnmG_N"/>
</dbReference>
<dbReference type="InterPro" id="IPR004417">
    <property type="entry name" value="TrmFO"/>
</dbReference>
<dbReference type="NCBIfam" id="TIGR00137">
    <property type="entry name" value="gid_trmFO"/>
    <property type="match status" value="1"/>
</dbReference>
<dbReference type="NCBIfam" id="NF003739">
    <property type="entry name" value="PRK05335.1"/>
    <property type="match status" value="1"/>
</dbReference>
<dbReference type="PANTHER" id="PTHR11806">
    <property type="entry name" value="GLUCOSE INHIBITED DIVISION PROTEIN A"/>
    <property type="match status" value="1"/>
</dbReference>
<dbReference type="PANTHER" id="PTHR11806:SF2">
    <property type="entry name" value="METHYLENETETRAHYDROFOLATE--TRNA-(URACIL-5-)-METHYLTRANSFERASE TRMFO"/>
    <property type="match status" value="1"/>
</dbReference>
<dbReference type="Pfam" id="PF01134">
    <property type="entry name" value="GIDA"/>
    <property type="match status" value="1"/>
</dbReference>
<dbReference type="SUPFAM" id="SSF51905">
    <property type="entry name" value="FAD/NAD(P)-binding domain"/>
    <property type="match status" value="1"/>
</dbReference>
<dbReference type="PROSITE" id="PS01281">
    <property type="entry name" value="GIDA_2"/>
    <property type="match status" value="1"/>
</dbReference>
<reference key="1">
    <citation type="journal article" date="2007" name="J. Bacteriol.">
        <title>The complete genome sequence of the lactic acid bacterial paradigm Lactococcus lactis subsp. cremoris MG1363.</title>
        <authorList>
            <person name="Wegmann U."/>
            <person name="O'Connell-Motherway M."/>
            <person name="Zomer A."/>
            <person name="Buist G."/>
            <person name="Shearman C."/>
            <person name="Canchaya C."/>
            <person name="Ventura M."/>
            <person name="Goesmann A."/>
            <person name="Gasson M.J."/>
            <person name="Kuipers O.P."/>
            <person name="van Sinderen D."/>
            <person name="Kok J."/>
        </authorList>
    </citation>
    <scope>NUCLEOTIDE SEQUENCE [LARGE SCALE GENOMIC DNA]</scope>
    <source>
        <strain>MG1363</strain>
    </source>
</reference>
<accession>A2RKQ0</accession>
<organism>
    <name type="scientific">Lactococcus lactis subsp. cremoris (strain MG1363)</name>
    <dbReference type="NCBI Taxonomy" id="416870"/>
    <lineage>
        <taxon>Bacteria</taxon>
        <taxon>Bacillati</taxon>
        <taxon>Bacillota</taxon>
        <taxon>Bacilli</taxon>
        <taxon>Lactobacillales</taxon>
        <taxon>Streptococcaceae</taxon>
        <taxon>Lactococcus</taxon>
        <taxon>Lactococcus cremoris subsp. cremoris</taxon>
    </lineage>
</organism>
<name>TRMFO_LACLM</name>
<sequence>MRKTHINVIGAGLAGSEAAYQIAKRGIPVKLYEMRGLKQTPQHKTDKFAELVCSNSLRGAAITNAVGLLKEEMRRLDSVIIKAAEYTQVPAGGALAVDREGFSDFVTKEVSNHPLVEVIREEITEIPQDELTIIATGPLTSDNLANKIREFNGADGFYFYDAAAPIIDANSINFDKVYKKSRYDKGEADYINCPMTKEEFQAFQEALISAEEAPLNSFEDLKVFEGCMPIEEMAKRGYKTMLFGPMKPVGLEYPDEYKGPRDGEFRTPYAVVQLRQDNASASLYNIVGFQTHLKWGEQKRVFQMIPGLENAEFVRYGVMHRNSYMDSPNLLKQTFQSRKQENLFFAGQMTGVEGYVESAASGLVAGINAAKLFNDEEVVIFPKITAIGSLPYYITHTDSKHFQPMNVTFGIVEELDGPRIRDKKERYTKVAERSLNTLTDIISKENLA</sequence>
<feature type="chain" id="PRO_1000063918" description="Methylenetetrahydrofolate--tRNA-(uracil-5-)-methyltransferase TrmFO">
    <location>
        <begin position="1"/>
        <end position="448"/>
    </location>
</feature>
<feature type="binding site" evidence="1">
    <location>
        <begin position="10"/>
        <end position="15"/>
    </location>
    <ligand>
        <name>FAD</name>
        <dbReference type="ChEBI" id="CHEBI:57692"/>
    </ligand>
</feature>
<proteinExistence type="inferred from homology"/>
<protein>
    <recommendedName>
        <fullName evidence="1">Methylenetetrahydrofolate--tRNA-(uracil-5-)-methyltransferase TrmFO</fullName>
        <ecNumber evidence="1">2.1.1.74</ecNumber>
    </recommendedName>
    <alternativeName>
        <fullName evidence="1">Folate-dependent tRNA (uracil-5-)-methyltransferase</fullName>
    </alternativeName>
    <alternativeName>
        <fullName evidence="1">Folate-dependent tRNA(M-5-U54)-methyltransferase</fullName>
    </alternativeName>
</protein>
<keyword id="KW-0963">Cytoplasm</keyword>
<keyword id="KW-0274">FAD</keyword>
<keyword id="KW-0285">Flavoprotein</keyword>
<keyword id="KW-0489">Methyltransferase</keyword>
<keyword id="KW-0520">NAD</keyword>
<keyword id="KW-0521">NADP</keyword>
<keyword id="KW-0808">Transferase</keyword>
<keyword id="KW-0819">tRNA processing</keyword>
<evidence type="ECO:0000255" key="1">
    <source>
        <dbReference type="HAMAP-Rule" id="MF_01037"/>
    </source>
</evidence>